<evidence type="ECO:0000255" key="1">
    <source>
        <dbReference type="HAMAP-Rule" id="MF_00731"/>
    </source>
</evidence>
<sequence>MMETMPNWLKQRAFLTPDRTAIEIEEEKVTFMQLHEKVVSVCEHLTHVGVKRGQKVAVLMKNGIEMITVIHALSYAGAVAVLLNTRLSREELLWQMDDAEVICLVTDQDFEAKDIPVYSFAEVMNGPKEEASIQEEFSLREAMTIIYTSGTTGKPKGVILTYGNHWASAVGSSLNLGLRDDDCWLACMPMFHVGGLSLLMKNIMYGMRILLVPKYDADFIHKALQTRGVTIISVVSKMLTDLLERLGEGTYPSSLRCMLLGGGPAPKPLLETCVDKGIPVYQTYGMTETSSQICTLSADYMLTKVGSAGKPLFQCQLRIEKDGVVVPPFAEGEIVVKGPNVTGGYFNREDATRETIQNGWLHTGDLGYLDEEGFLYVLDRRSDLIISGGENIYPAQIEEVLLSHPMVAEAGVVGMTDDKWGQVPAAFVVKSGEITEEEILHFCEEKLAKYKVPKKACFLEELPRNASKKLLRRELRQLVEEM</sequence>
<protein>
    <recommendedName>
        <fullName evidence="1">2-succinylbenzoate--CoA ligase</fullName>
        <ecNumber evidence="1">6.2.1.26</ecNumber>
    </recommendedName>
    <alternativeName>
        <fullName evidence="1">o-succinylbenzoyl-CoA synthetase</fullName>
        <shortName evidence="1">OSB-CoA synthetase</shortName>
    </alternativeName>
</protein>
<feature type="chain" id="PRO_1000132739" description="2-succinylbenzoate--CoA ligase">
    <location>
        <begin position="1"/>
        <end position="482"/>
    </location>
</feature>
<comment type="function">
    <text evidence="1">Converts 2-succinylbenzoate (OSB) to 2-succinylbenzoyl-CoA (OSB-CoA).</text>
</comment>
<comment type="catalytic activity">
    <reaction evidence="1">
        <text>2-succinylbenzoate + ATP + CoA = 2-succinylbenzoyl-CoA + AMP + diphosphate</text>
        <dbReference type="Rhea" id="RHEA:17009"/>
        <dbReference type="ChEBI" id="CHEBI:18325"/>
        <dbReference type="ChEBI" id="CHEBI:30616"/>
        <dbReference type="ChEBI" id="CHEBI:33019"/>
        <dbReference type="ChEBI" id="CHEBI:57287"/>
        <dbReference type="ChEBI" id="CHEBI:57364"/>
        <dbReference type="ChEBI" id="CHEBI:456215"/>
        <dbReference type="EC" id="6.2.1.26"/>
    </reaction>
</comment>
<comment type="pathway">
    <text evidence="1">Quinol/quinone metabolism; 1,4-dihydroxy-2-naphthoate biosynthesis; 1,4-dihydroxy-2-naphthoate from chorismate: step 5/7.</text>
</comment>
<comment type="pathway">
    <text evidence="1">Quinol/quinone metabolism; menaquinone biosynthesis.</text>
</comment>
<comment type="similarity">
    <text evidence="1">Belongs to the ATP-dependent AMP-binding enzyme family. MenE subfamily.</text>
</comment>
<dbReference type="EC" id="6.2.1.26" evidence="1"/>
<dbReference type="EMBL" id="CP001283">
    <property type="protein sequence ID" value="ACK88096.1"/>
    <property type="molecule type" value="Genomic_DNA"/>
</dbReference>
<dbReference type="SMR" id="B7JDD6"/>
<dbReference type="KEGG" id="bcu:BCAH820_4965"/>
<dbReference type="HOGENOM" id="CLU_000022_59_0_9"/>
<dbReference type="UniPathway" id="UPA00079"/>
<dbReference type="UniPathway" id="UPA01057">
    <property type="reaction ID" value="UER00166"/>
</dbReference>
<dbReference type="Proteomes" id="UP000001363">
    <property type="component" value="Chromosome"/>
</dbReference>
<dbReference type="GO" id="GO:0005524">
    <property type="term" value="F:ATP binding"/>
    <property type="evidence" value="ECO:0007669"/>
    <property type="project" value="UniProtKB-KW"/>
</dbReference>
<dbReference type="GO" id="GO:0008756">
    <property type="term" value="F:o-succinylbenzoate-CoA ligase activity"/>
    <property type="evidence" value="ECO:0007669"/>
    <property type="project" value="UniProtKB-UniRule"/>
</dbReference>
<dbReference type="GO" id="GO:0009234">
    <property type="term" value="P:menaquinone biosynthetic process"/>
    <property type="evidence" value="ECO:0007669"/>
    <property type="project" value="UniProtKB-UniRule"/>
</dbReference>
<dbReference type="CDD" id="cd05912">
    <property type="entry name" value="OSB_CoA_lg"/>
    <property type="match status" value="1"/>
</dbReference>
<dbReference type="FunFam" id="3.30.300.30:FF:000008">
    <property type="entry name" value="2,3-dihydroxybenzoate-AMP ligase"/>
    <property type="match status" value="1"/>
</dbReference>
<dbReference type="Gene3D" id="3.30.300.30">
    <property type="match status" value="1"/>
</dbReference>
<dbReference type="Gene3D" id="3.40.50.12780">
    <property type="entry name" value="N-terminal domain of ligase-like"/>
    <property type="match status" value="1"/>
</dbReference>
<dbReference type="HAMAP" id="MF_00731">
    <property type="entry name" value="MenE"/>
    <property type="match status" value="1"/>
</dbReference>
<dbReference type="InterPro" id="IPR025110">
    <property type="entry name" value="AMP-bd_C"/>
</dbReference>
<dbReference type="InterPro" id="IPR045851">
    <property type="entry name" value="AMP-bd_C_sf"/>
</dbReference>
<dbReference type="InterPro" id="IPR020845">
    <property type="entry name" value="AMP-binding_CS"/>
</dbReference>
<dbReference type="InterPro" id="IPR000873">
    <property type="entry name" value="AMP-dep_synth/lig_dom"/>
</dbReference>
<dbReference type="InterPro" id="IPR042099">
    <property type="entry name" value="ANL_N_sf"/>
</dbReference>
<dbReference type="InterPro" id="IPR050237">
    <property type="entry name" value="ATP-dep_AMP-bd_enzyme"/>
</dbReference>
<dbReference type="InterPro" id="IPR010192">
    <property type="entry name" value="MenE"/>
</dbReference>
<dbReference type="NCBIfam" id="TIGR01923">
    <property type="entry name" value="menE"/>
    <property type="match status" value="1"/>
</dbReference>
<dbReference type="NCBIfam" id="NF002966">
    <property type="entry name" value="PRK03640.1"/>
    <property type="match status" value="1"/>
</dbReference>
<dbReference type="PANTHER" id="PTHR43767">
    <property type="entry name" value="LONG-CHAIN-FATTY-ACID--COA LIGASE"/>
    <property type="match status" value="1"/>
</dbReference>
<dbReference type="PANTHER" id="PTHR43767:SF1">
    <property type="entry name" value="NONRIBOSOMAL PEPTIDE SYNTHASE PES1 (EUROFUNG)-RELATED"/>
    <property type="match status" value="1"/>
</dbReference>
<dbReference type="Pfam" id="PF00501">
    <property type="entry name" value="AMP-binding"/>
    <property type="match status" value="1"/>
</dbReference>
<dbReference type="Pfam" id="PF13193">
    <property type="entry name" value="AMP-binding_C"/>
    <property type="match status" value="1"/>
</dbReference>
<dbReference type="SUPFAM" id="SSF56801">
    <property type="entry name" value="Acetyl-CoA synthetase-like"/>
    <property type="match status" value="1"/>
</dbReference>
<dbReference type="PROSITE" id="PS00455">
    <property type="entry name" value="AMP_BINDING"/>
    <property type="match status" value="1"/>
</dbReference>
<organism>
    <name type="scientific">Bacillus cereus (strain AH820)</name>
    <dbReference type="NCBI Taxonomy" id="405535"/>
    <lineage>
        <taxon>Bacteria</taxon>
        <taxon>Bacillati</taxon>
        <taxon>Bacillota</taxon>
        <taxon>Bacilli</taxon>
        <taxon>Bacillales</taxon>
        <taxon>Bacillaceae</taxon>
        <taxon>Bacillus</taxon>
        <taxon>Bacillus cereus group</taxon>
    </lineage>
</organism>
<keyword id="KW-0067">ATP-binding</keyword>
<keyword id="KW-0436">Ligase</keyword>
<keyword id="KW-0474">Menaquinone biosynthesis</keyword>
<keyword id="KW-0547">Nucleotide-binding</keyword>
<gene>
    <name evidence="1" type="primary">menE</name>
    <name type="ordered locus">BCAH820_4965</name>
</gene>
<proteinExistence type="inferred from homology"/>
<accession>B7JDD6</accession>
<name>MENE_BACC0</name>
<reference key="1">
    <citation type="submission" date="2008-10" db="EMBL/GenBank/DDBJ databases">
        <title>Genome sequence of Bacillus cereus AH820.</title>
        <authorList>
            <person name="Dodson R.J."/>
            <person name="Durkin A.S."/>
            <person name="Rosovitz M.J."/>
            <person name="Rasko D.A."/>
            <person name="Hoffmaster A."/>
            <person name="Ravel J."/>
            <person name="Sutton G."/>
        </authorList>
    </citation>
    <scope>NUCLEOTIDE SEQUENCE [LARGE SCALE GENOMIC DNA]</scope>
    <source>
        <strain>AH820</strain>
    </source>
</reference>